<reference key="1">
    <citation type="journal article" date="1992" name="Plant Mol. Biol.">
        <title>The glucosinolate-degrading enzyme myrosinase in Brassicaceae is encoded by a gene family.</title>
        <authorList>
            <person name="Xue J."/>
            <person name="Lenman M."/>
            <person name="Falk A."/>
            <person name="Rask L."/>
        </authorList>
    </citation>
    <scope>NUCLEOTIDE SEQUENCE [MRNA] OF 280-501</scope>
    <scope>PARTIAL PROTEIN SEQUENCE</scope>
    <source>
        <strain>cv. Maxi</strain>
        <tissue>Seed</tissue>
    </source>
</reference>
<reference key="2">
    <citation type="journal article" date="1997" name="Structure">
        <title>The crystal structures of Sinapis alba myrosinase and a covalent glycosyl-enzyme intermediate provide insights into the substrate recognition and active-site machinery of an S-glycosidase.</title>
        <authorList>
            <person name="Burmeister W.P."/>
            <person name="Cottaz S."/>
            <person name="Driguez H."/>
            <person name="Iori R."/>
            <person name="Palmieri S."/>
            <person name="Henrissat B."/>
        </authorList>
    </citation>
    <scope>X-RAY CRYSTALLOGRAPHY (1.64 ANGSTROMS)</scope>
    <scope>SUBUNIT</scope>
    <scope>GLYCOSYLATION AT ASN-21; ASN-60; ASN-90; ASN-218; ASN-244; ASN-265; ASN-292; ASN-343; ASN-346; ASN-361 AND ASN-482</scope>
    <source>
        <strain>cv. Emergo</strain>
        <tissue>Seed</tissue>
    </source>
</reference>
<reference key="3">
    <citation type="journal article" date="2000" name="J. Biol. Chem.">
        <title>High resolution X-ray crystallography shows that ascorbate is a cofactor for myrosinase and substitutes for the function of the catalytic base.</title>
        <authorList>
            <person name="Burmeister W.P."/>
            <person name="Cottaz S."/>
            <person name="Rollin P."/>
            <person name="Vasella A."/>
            <person name="Henrissat B."/>
        </authorList>
    </citation>
    <scope>X-RAY CRYSTALLOGRAPHY (1.2 ANGSTROMS) IN COMPLEX WITH ASCORBATE AND TRANSITION STATE ANALOGS</scope>
    <scope>SUBUNIT</scope>
    <scope>GLYCOSYLATION AT ASN-21; ASN-60; ASN-90; ASN-218; ASN-244; ASN-265; ASN-292; ASN-343; ASN-346; ASN-361 AND ASN-482</scope>
    <source>
        <strain>cv. Emergo</strain>
        <tissue>Seed</tissue>
    </source>
</reference>
<reference key="4">
    <citation type="journal article" date="2005" name="Org. Biomol. Chem.">
        <title>The glucosinolate-myrosinase system. New insights into enzyme-substrate interactions by use of simplified inhibitors.</title>
        <authorList>
            <person name="Bourderioux A."/>
            <person name="Lefoix M."/>
            <person name="Gueyrard D."/>
            <person name="Tatibouet A."/>
            <person name="Cottaz S."/>
            <person name="Arzt S."/>
            <person name="Burmeister W.P."/>
            <person name="Rollin P."/>
        </authorList>
    </citation>
    <scope>X-RAY CRYSTALLOGRAPHY (1.6 ANGSTROMS)</scope>
    <scope>SUBUNIT</scope>
    <scope>GLYCOSYLATION AT ASN-21; ASN-60; ASN-90; ASN-218; ASN-244; ASN-265; ASN-292; ASN-343; ASN-346; ASN-361 AND ASN-482</scope>
</reference>
<dbReference type="EC" id="3.2.1.147"/>
<dbReference type="EMBL" id="X59878">
    <property type="protein sequence ID" value="CAA42533.1"/>
    <property type="molecule type" value="mRNA"/>
</dbReference>
<dbReference type="PIR" id="S19146">
    <property type="entry name" value="S19146"/>
</dbReference>
<dbReference type="PDB" id="1DWA">
    <property type="method" value="X-ray"/>
    <property type="resolution" value="2.00 A"/>
    <property type="chains" value="M=3-501"/>
</dbReference>
<dbReference type="PDB" id="1DWF">
    <property type="method" value="X-ray"/>
    <property type="resolution" value="2.00 A"/>
    <property type="chains" value="M=3-501"/>
</dbReference>
<dbReference type="PDB" id="1DWG">
    <property type="method" value="X-ray"/>
    <property type="resolution" value="2.00 A"/>
    <property type="chains" value="M=3-501"/>
</dbReference>
<dbReference type="PDB" id="1DWH">
    <property type="method" value="X-ray"/>
    <property type="resolution" value="2.00 A"/>
    <property type="chains" value="M=3-501"/>
</dbReference>
<dbReference type="PDB" id="1DWI">
    <property type="method" value="X-ray"/>
    <property type="resolution" value="2.00 A"/>
    <property type="chains" value="M=3-501"/>
</dbReference>
<dbReference type="PDB" id="1DWJ">
    <property type="method" value="X-ray"/>
    <property type="resolution" value="2.40 A"/>
    <property type="chains" value="M=3-501"/>
</dbReference>
<dbReference type="PDB" id="1E4M">
    <property type="method" value="X-ray"/>
    <property type="resolution" value="1.20 A"/>
    <property type="chains" value="M=1-501"/>
</dbReference>
<dbReference type="PDB" id="1E6Q">
    <property type="method" value="X-ray"/>
    <property type="resolution" value="1.35 A"/>
    <property type="chains" value="M=1-501"/>
</dbReference>
<dbReference type="PDB" id="1E6S">
    <property type="method" value="X-ray"/>
    <property type="resolution" value="1.35 A"/>
    <property type="chains" value="M=1-501"/>
</dbReference>
<dbReference type="PDB" id="1E6X">
    <property type="method" value="X-ray"/>
    <property type="resolution" value="1.60 A"/>
    <property type="chains" value="M=1-501"/>
</dbReference>
<dbReference type="PDB" id="1E70">
    <property type="method" value="X-ray"/>
    <property type="resolution" value="1.65 A"/>
    <property type="chains" value="M=1-501"/>
</dbReference>
<dbReference type="PDB" id="1E71">
    <property type="method" value="X-ray"/>
    <property type="resolution" value="1.50 A"/>
    <property type="chains" value="M=1-501"/>
</dbReference>
<dbReference type="PDB" id="1E72">
    <property type="method" value="X-ray"/>
    <property type="resolution" value="1.60 A"/>
    <property type="chains" value="M=1-501"/>
</dbReference>
<dbReference type="PDB" id="1E73">
    <property type="method" value="X-ray"/>
    <property type="resolution" value="1.50 A"/>
    <property type="chains" value="M=1-501"/>
</dbReference>
<dbReference type="PDB" id="1MYR">
    <property type="method" value="X-ray"/>
    <property type="resolution" value="1.64 A"/>
    <property type="chains" value="A=1-501"/>
</dbReference>
<dbReference type="PDB" id="1W9B">
    <property type="method" value="X-ray"/>
    <property type="resolution" value="1.70 A"/>
    <property type="chains" value="M=1-501"/>
</dbReference>
<dbReference type="PDB" id="1W9D">
    <property type="method" value="X-ray"/>
    <property type="resolution" value="1.60 A"/>
    <property type="chains" value="M=1-501"/>
</dbReference>
<dbReference type="PDB" id="2WXD">
    <property type="method" value="X-ray"/>
    <property type="resolution" value="1.60 A"/>
    <property type="chains" value="M=1-501"/>
</dbReference>
<dbReference type="PDBsum" id="1DWA"/>
<dbReference type="PDBsum" id="1DWF"/>
<dbReference type="PDBsum" id="1DWG"/>
<dbReference type="PDBsum" id="1DWH"/>
<dbReference type="PDBsum" id="1DWI"/>
<dbReference type="PDBsum" id="1DWJ"/>
<dbReference type="PDBsum" id="1E4M"/>
<dbReference type="PDBsum" id="1E6Q"/>
<dbReference type="PDBsum" id="1E6S"/>
<dbReference type="PDBsum" id="1E6X"/>
<dbReference type="PDBsum" id="1E70"/>
<dbReference type="PDBsum" id="1E71"/>
<dbReference type="PDBsum" id="1E72"/>
<dbReference type="PDBsum" id="1E73"/>
<dbReference type="PDBsum" id="1MYR"/>
<dbReference type="PDBsum" id="1W9B"/>
<dbReference type="PDBsum" id="1W9D"/>
<dbReference type="PDBsum" id="2WXD"/>
<dbReference type="SMR" id="P29736"/>
<dbReference type="CAZy" id="GH1">
    <property type="family name" value="Glycoside Hydrolase Family 1"/>
</dbReference>
<dbReference type="iPTMnet" id="P29736"/>
<dbReference type="BRENDA" id="3.2.1.147">
    <property type="organism ID" value="5734"/>
</dbReference>
<dbReference type="EvolutionaryTrace" id="P29736"/>
<dbReference type="GO" id="GO:0005773">
    <property type="term" value="C:vacuole"/>
    <property type="evidence" value="ECO:0007669"/>
    <property type="project" value="UniProtKB-SubCell"/>
</dbReference>
<dbReference type="GO" id="GO:0008422">
    <property type="term" value="F:beta-glucosidase activity"/>
    <property type="evidence" value="ECO:0007669"/>
    <property type="project" value="TreeGrafter"/>
</dbReference>
<dbReference type="GO" id="GO:0046872">
    <property type="term" value="F:metal ion binding"/>
    <property type="evidence" value="ECO:0007669"/>
    <property type="project" value="UniProtKB-KW"/>
</dbReference>
<dbReference type="GO" id="GO:0019137">
    <property type="term" value="F:thioglucosidase activity"/>
    <property type="evidence" value="ECO:0007669"/>
    <property type="project" value="UniProtKB-EC"/>
</dbReference>
<dbReference type="GO" id="GO:0005975">
    <property type="term" value="P:carbohydrate metabolic process"/>
    <property type="evidence" value="ECO:0007669"/>
    <property type="project" value="InterPro"/>
</dbReference>
<dbReference type="FunFam" id="3.20.20.80:FF:000041">
    <property type="entry name" value="Beta-glucosidase 7"/>
    <property type="match status" value="1"/>
</dbReference>
<dbReference type="Gene3D" id="3.20.20.80">
    <property type="entry name" value="Glycosidases"/>
    <property type="match status" value="1"/>
</dbReference>
<dbReference type="InterPro" id="IPR001360">
    <property type="entry name" value="Glyco_hydro_1"/>
</dbReference>
<dbReference type="InterPro" id="IPR018120">
    <property type="entry name" value="Glyco_hydro_1_AS"/>
</dbReference>
<dbReference type="InterPro" id="IPR033132">
    <property type="entry name" value="Glyco_hydro_1_N_CS"/>
</dbReference>
<dbReference type="InterPro" id="IPR017853">
    <property type="entry name" value="Glycoside_hydrolase_SF"/>
</dbReference>
<dbReference type="PANTHER" id="PTHR10353">
    <property type="entry name" value="GLYCOSYL HYDROLASE"/>
    <property type="match status" value="1"/>
</dbReference>
<dbReference type="PANTHER" id="PTHR10353:SF228">
    <property type="entry name" value="THIOGLUCOSIDASE"/>
    <property type="match status" value="1"/>
</dbReference>
<dbReference type="Pfam" id="PF00232">
    <property type="entry name" value="Glyco_hydro_1"/>
    <property type="match status" value="1"/>
</dbReference>
<dbReference type="PRINTS" id="PR00131">
    <property type="entry name" value="GLHYDRLASE1"/>
</dbReference>
<dbReference type="SUPFAM" id="SSF51445">
    <property type="entry name" value="(Trans)glycosidases"/>
    <property type="match status" value="1"/>
</dbReference>
<dbReference type="PROSITE" id="PS00572">
    <property type="entry name" value="GLYCOSYL_HYDROL_F1_1"/>
    <property type="match status" value="1"/>
</dbReference>
<dbReference type="PROSITE" id="PS00653">
    <property type="entry name" value="GLYCOSYL_HYDROL_F1_2"/>
    <property type="match status" value="1"/>
</dbReference>
<sequence length="501" mass="57023">DEEITCQENLPFTCGNTDALNSSSFSSDFIFGVASSAYQIEGTIGRGLNIWDGFTHRYPNKSGPDHGNGDTTCDSFSYWQKDIDVLDELNATGYRFSIAWSRIIPRGKRSRGVNEKGIDYYHGLISGLIKKGITPFVTLFHWDLPQTLQDEYEGFLDPQIIDDFKDYADLCFEEFGDSVKYWLTINQLYSVPTRGYGSALDAPGRCSPTVDPSCYAGNSSTEPYIVAHHQLLAHAKVVDLYRKNYTHQGGKIGPTMITRWFLPYNDTDRHSIAATERMKEFFLGWFMGPLTNGTYPQIMIDTVGERLPSFSPEESNLVKGSYDFLGLNYYFTQYAQPSPNPVNSTNHTAMMDAGAKLTYINASGHYIGPLFEKDKADSTDNIYYYPKGIYSVMDYFKNKYYNPLIYVTENGISTPGDENRNQSMLDYTRIDYLCSHLCFLNKVIKEKDVNVKGYLAWALGDNYEFNKGFTVRFGLSYIDWNNVTDRDLKKSGQWYQSFISP</sequence>
<protein>
    <recommendedName>
        <fullName>Myrosinase MA1</fullName>
        <ecNumber>3.2.1.147</ecNumber>
    </recommendedName>
    <alternativeName>
        <fullName>Sinigrinase</fullName>
    </alternativeName>
    <alternativeName>
        <fullName>Thioglucosidase</fullName>
    </alternativeName>
</protein>
<organism>
    <name type="scientific">Sinapis alba</name>
    <name type="common">White mustard</name>
    <name type="synonym">Brassica hirta</name>
    <dbReference type="NCBI Taxonomy" id="3728"/>
    <lineage>
        <taxon>Eukaryota</taxon>
        <taxon>Viridiplantae</taxon>
        <taxon>Streptophyta</taxon>
        <taxon>Embryophyta</taxon>
        <taxon>Tracheophyta</taxon>
        <taxon>Spermatophyta</taxon>
        <taxon>Magnoliopsida</taxon>
        <taxon>eudicotyledons</taxon>
        <taxon>Gunneridae</taxon>
        <taxon>Pentapetalae</taxon>
        <taxon>rosids</taxon>
        <taxon>malvids</taxon>
        <taxon>Brassicales</taxon>
        <taxon>Brassicaceae</taxon>
        <taxon>Brassiceae</taxon>
        <taxon>Sinapis</taxon>
    </lineage>
</organism>
<comment type="function">
    <text>Degradation of glucosinolates (glucose residue linked by a thioglucoside bound to an amino acid derivative) to glucose, sulfate and any of the products: thiocyanates, isothiocyanates, nitriles, epithionitriles or oxazolidine-2-thiones.</text>
</comment>
<comment type="catalytic activity">
    <reaction>
        <text>a thioglucoside + H2O = a sugar + a thiol.</text>
        <dbReference type="EC" id="3.2.1.147"/>
    </reaction>
</comment>
<comment type="subunit">
    <text evidence="2 3 4">Homodimer.</text>
</comment>
<comment type="subcellular location">
    <subcellularLocation>
        <location>Vacuole</location>
    </subcellularLocation>
</comment>
<comment type="tissue specificity">
    <text>In vacuoles called myrosin grains of a certain class of cells, myrosin cells, distributed in the cotyledons and the axis of the embryo as well as in different organs of the growing plant.</text>
</comment>
<comment type="miscellaneous">
    <text>It seems that the absence of a catalytic proton donor in plant myrosinases is not impairing the hydrolysis of glucosinolates.</text>
</comment>
<comment type="similarity">
    <text evidence="5">Belongs to the glycosyl hydrolase 1 family.</text>
</comment>
<evidence type="ECO:0000250" key="1"/>
<evidence type="ECO:0000269" key="2">
    <source>
    </source>
</evidence>
<evidence type="ECO:0000269" key="3">
    <source>
    </source>
</evidence>
<evidence type="ECO:0000269" key="4">
    <source>
    </source>
</evidence>
<evidence type="ECO:0000305" key="5"/>
<evidence type="ECO:0007829" key="6">
    <source>
        <dbReference type="PDB" id="1E4M"/>
    </source>
</evidence>
<feature type="chain" id="PRO_0000063901" description="Myrosinase MA1">
    <location>
        <begin position="1"/>
        <end position="501"/>
    </location>
</feature>
<feature type="active site" description="Nucleophile">
    <location>
        <position position="409"/>
    </location>
</feature>
<feature type="binding site">
    <location>
        <position position="39"/>
    </location>
    <ligand>
        <name>substrate</name>
    </ligand>
</feature>
<feature type="binding site">
    <location>
        <position position="56"/>
    </location>
    <ligand>
        <name>Zn(2+)</name>
        <dbReference type="ChEBI" id="CHEBI:29105"/>
        <note>ligand shared between dimeric partners</note>
    </ligand>
</feature>
<feature type="binding site">
    <location>
        <position position="70"/>
    </location>
    <ligand>
        <name>Zn(2+)</name>
        <dbReference type="ChEBI" id="CHEBI:29105"/>
        <note>ligand shared between dimeric partners</note>
    </ligand>
</feature>
<feature type="binding site">
    <location>
        <position position="141"/>
    </location>
    <ligand>
        <name>substrate</name>
    </ligand>
</feature>
<feature type="binding site">
    <location>
        <position position="186"/>
    </location>
    <ligand>
        <name>substrate</name>
    </ligand>
</feature>
<feature type="binding site" evidence="2">
    <location>
        <position position="187"/>
    </location>
    <ligand>
        <name>L-ascorbate</name>
        <dbReference type="ChEBI" id="CHEBI:38290"/>
    </ligand>
</feature>
<feature type="binding site" evidence="2">
    <location>
        <position position="259"/>
    </location>
    <ligand>
        <name>L-ascorbate</name>
        <dbReference type="ChEBI" id="CHEBI:38290"/>
    </ligand>
</feature>
<feature type="binding site" evidence="1">
    <location>
        <position position="330"/>
    </location>
    <ligand>
        <name>substrate</name>
    </ligand>
</feature>
<feature type="binding site" evidence="1">
    <location>
        <position position="457"/>
    </location>
    <ligand>
        <name>substrate</name>
    </ligand>
</feature>
<feature type="binding site" evidence="1">
    <location>
        <begin position="464"/>
        <end position="465"/>
    </location>
    <ligand>
        <name>substrate</name>
    </ligand>
</feature>
<feature type="glycosylation site" description="N-linked (GlcNAc...) asparagine" evidence="2 3 4">
    <location>
        <position position="21"/>
    </location>
</feature>
<feature type="glycosylation site" description="N-linked (GlcNAc...) asparagine" evidence="2 3 4">
    <location>
        <position position="60"/>
    </location>
</feature>
<feature type="glycosylation site" description="N-linked (GlcNAc...) asparagine" evidence="2 3 4">
    <location>
        <position position="90"/>
    </location>
</feature>
<feature type="glycosylation site" description="N-linked (GlcNAc...) asparagine" evidence="2 3 4">
    <location>
        <position position="218"/>
    </location>
</feature>
<feature type="glycosylation site" description="N-linked (GlcNAc...) asparagine" evidence="2 3 4">
    <location>
        <position position="244"/>
    </location>
</feature>
<feature type="glycosylation site" description="N-linked (GlcNAc...) asparagine" evidence="2 3 4">
    <location>
        <position position="265"/>
    </location>
</feature>
<feature type="glycosylation site" description="N-linked (GlcNAc...) asparagine" evidence="2 3 4">
    <location>
        <position position="292"/>
    </location>
</feature>
<feature type="glycosylation site" description="N-linked (GlcNAc...) asparagine" evidence="2 3 4">
    <location>
        <position position="343"/>
    </location>
</feature>
<feature type="glycosylation site" description="N-linked (GlcNAc...) asparagine" evidence="2 3 4">
    <location>
        <position position="346"/>
    </location>
</feature>
<feature type="glycosylation site" description="N-linked (GlcNAc...) asparagine" evidence="2 3 4">
    <location>
        <position position="361"/>
    </location>
</feature>
<feature type="glycosylation site" description="N-linked (GlcNAc...) asparagine" evidence="2 3 4">
    <location>
        <position position="482"/>
    </location>
</feature>
<feature type="disulfide bond">
    <location>
        <begin position="6"/>
        <end position="438"/>
    </location>
</feature>
<feature type="disulfide bond">
    <location>
        <begin position="14"/>
        <end position="434"/>
    </location>
</feature>
<feature type="disulfide bond">
    <location>
        <begin position="206"/>
        <end position="214"/>
    </location>
</feature>
<feature type="sequence conflict" description="In Ref. 1; CAA42533." evidence="5" ref="1">
    <original>KD</original>
    <variation>EN</variation>
    <location>
        <begin position="373"/>
        <end position="374"/>
    </location>
</feature>
<feature type="sequence conflict" description="In Ref. 1; CAA42533." evidence="5" ref="1">
    <original>STD</original>
    <variation>ETK</variation>
    <location>
        <begin position="378"/>
        <end position="380"/>
    </location>
</feature>
<feature type="sequence conflict" description="In Ref. 1; CAA42533." evidence="5" ref="1">
    <original>S</original>
    <variation>K</variation>
    <location>
        <position position="497"/>
    </location>
</feature>
<feature type="sequence conflict" description="In Ref. 1." evidence="5" ref="1">
    <original>P</original>
    <variation>PGIKSPLKKDFLRSSLTFEKNKKLADA</variation>
    <location>
        <position position="501"/>
    </location>
</feature>
<feature type="strand" evidence="6">
    <location>
        <begin position="9"/>
        <end position="11"/>
    </location>
</feature>
<feature type="turn" evidence="6">
    <location>
        <begin position="17"/>
        <end position="19"/>
    </location>
</feature>
<feature type="helix" evidence="6">
    <location>
        <begin position="22"/>
        <end position="24"/>
    </location>
</feature>
<feature type="strand" evidence="6">
    <location>
        <begin position="30"/>
        <end position="34"/>
    </location>
</feature>
<feature type="helix" evidence="6">
    <location>
        <begin position="37"/>
        <end position="40"/>
    </location>
</feature>
<feature type="helix" evidence="6">
    <location>
        <begin position="50"/>
        <end position="57"/>
    </location>
</feature>
<feature type="helix" evidence="6">
    <location>
        <begin position="59"/>
        <end position="62"/>
    </location>
</feature>
<feature type="strand" evidence="6">
    <location>
        <begin position="69"/>
        <end position="71"/>
    </location>
</feature>
<feature type="helix" evidence="6">
    <location>
        <begin position="75"/>
        <end position="89"/>
    </location>
</feature>
<feature type="strand" evidence="6">
    <location>
        <begin position="92"/>
        <end position="97"/>
    </location>
</feature>
<feature type="helix" evidence="6">
    <location>
        <begin position="100"/>
        <end position="103"/>
    </location>
</feature>
<feature type="helix" evidence="6">
    <location>
        <begin position="109"/>
        <end position="111"/>
    </location>
</feature>
<feature type="helix" evidence="6">
    <location>
        <begin position="115"/>
        <end position="130"/>
    </location>
</feature>
<feature type="strand" evidence="6">
    <location>
        <begin position="134"/>
        <end position="142"/>
    </location>
</feature>
<feature type="helix" evidence="6">
    <location>
        <begin position="146"/>
        <end position="152"/>
    </location>
</feature>
<feature type="helix" evidence="6">
    <location>
        <begin position="154"/>
        <end position="156"/>
    </location>
</feature>
<feature type="helix" evidence="6">
    <location>
        <begin position="160"/>
        <end position="175"/>
    </location>
</feature>
<feature type="turn" evidence="6">
    <location>
        <begin position="176"/>
        <end position="178"/>
    </location>
</feature>
<feature type="strand" evidence="6">
    <location>
        <begin position="181"/>
        <end position="186"/>
    </location>
</feature>
<feature type="helix" evidence="6">
    <location>
        <begin position="190"/>
        <end position="196"/>
    </location>
</feature>
<feature type="turn" evidence="6">
    <location>
        <begin position="208"/>
        <end position="210"/>
    </location>
</feature>
<feature type="turn" evidence="6">
    <location>
        <begin position="219"/>
        <end position="221"/>
    </location>
</feature>
<feature type="helix" evidence="6">
    <location>
        <begin position="222"/>
        <end position="244"/>
    </location>
</feature>
<feature type="helix" evidence="6">
    <location>
        <begin position="246"/>
        <end position="248"/>
    </location>
</feature>
<feature type="strand" evidence="6">
    <location>
        <begin position="251"/>
        <end position="253"/>
    </location>
</feature>
<feature type="strand" evidence="6">
    <location>
        <begin position="255"/>
        <end position="265"/>
    </location>
</feature>
<feature type="helix" evidence="6">
    <location>
        <begin position="269"/>
        <end position="282"/>
    </location>
</feature>
<feature type="helix" evidence="6">
    <location>
        <begin position="284"/>
        <end position="292"/>
    </location>
</feature>
<feature type="helix" evidence="6">
    <location>
        <begin position="297"/>
        <end position="303"/>
    </location>
</feature>
<feature type="helix" evidence="6">
    <location>
        <begin position="304"/>
        <end position="306"/>
    </location>
</feature>
<feature type="helix" evidence="6">
    <location>
        <begin position="312"/>
        <end position="318"/>
    </location>
</feature>
<feature type="strand" evidence="6">
    <location>
        <begin position="323"/>
        <end position="337"/>
    </location>
</feature>
<feature type="helix" evidence="6">
    <location>
        <begin position="349"/>
        <end position="353"/>
    </location>
</feature>
<feature type="strand" evidence="6">
    <location>
        <begin position="355"/>
        <end position="360"/>
    </location>
</feature>
<feature type="strand" evidence="6">
    <location>
        <begin position="368"/>
        <end position="372"/>
    </location>
</feature>
<feature type="helix" evidence="6">
    <location>
        <begin position="378"/>
        <end position="380"/>
    </location>
</feature>
<feature type="helix" evidence="6">
    <location>
        <begin position="387"/>
        <end position="399"/>
    </location>
</feature>
<feature type="strand" evidence="6">
    <location>
        <begin position="405"/>
        <end position="409"/>
    </location>
</feature>
<feature type="helix" evidence="6">
    <location>
        <begin position="420"/>
        <end position="424"/>
    </location>
</feature>
<feature type="helix" evidence="6">
    <location>
        <begin position="427"/>
        <end position="447"/>
    </location>
</feature>
<feature type="strand" evidence="6">
    <location>
        <begin position="451"/>
        <end position="457"/>
    </location>
</feature>
<feature type="turn" evidence="6">
    <location>
        <begin position="465"/>
        <end position="467"/>
    </location>
</feature>
<feature type="strand" evidence="6">
    <location>
        <begin position="470"/>
        <end position="472"/>
    </location>
</feature>
<feature type="strand" evidence="6">
    <location>
        <begin position="475"/>
        <end position="479"/>
    </location>
</feature>
<feature type="strand" evidence="6">
    <location>
        <begin position="482"/>
        <end position="488"/>
    </location>
</feature>
<feature type="helix" evidence="6">
    <location>
        <begin position="490"/>
        <end position="499"/>
    </location>
</feature>
<accession>P29736</accession>
<accession>Q7SIB0</accession>
<proteinExistence type="evidence at protein level"/>
<name>MYRA_SINAL</name>
<keyword id="KW-0002">3D-structure</keyword>
<keyword id="KW-0903">Direct protein sequencing</keyword>
<keyword id="KW-1015">Disulfide bond</keyword>
<keyword id="KW-0325">Glycoprotein</keyword>
<keyword id="KW-0326">Glycosidase</keyword>
<keyword id="KW-0378">Hydrolase</keyword>
<keyword id="KW-0479">Metal-binding</keyword>
<keyword id="KW-0926">Vacuole</keyword>
<keyword id="KW-0862">Zinc</keyword>